<keyword id="KW-0975">Bacterial flagellum</keyword>
<keyword id="KW-0175">Coiled coil</keyword>
<keyword id="KW-1185">Reference proteome</keyword>
<keyword id="KW-0964">Secreted</keyword>
<sequence length="377" mass="39905">MAVNVNTNVSAMTAQRYLTSATNAQQSSMERLSSGYKINSAKDDAAGLQISNRLNVQSRGLGVAVRNANDGISMAQTAEGAMKETTNILQRMRDLSLQSANGSNSKADRVAIQEEITALNDELNRVAETTSFGGNKLLNGTFATKSFQIGADNGEAVMLNIKDMRSDNALMGGKTYQAANGKDKNWGVEAGKTDLTITLKDKREGDVTISINAKEGDDIEELATYINGQTDMIKASVDEEGKLQLFTDNNRIDGAATFGGALAGELGIGAAQDVTVDTLDVTTVGGAQESVAIVDAALKYVDSHRAELGAFQNRFNHAINNLDNINENVNASKSRIKDTDFAKETTALTKAQILSQASSSVLAQAKQAPNSALALLG</sequence>
<organism>
    <name type="scientific">Vibrio cholerae serotype O1 (strain ATCC 39315 / El Tor Inaba N16961)</name>
    <dbReference type="NCBI Taxonomy" id="243277"/>
    <lineage>
        <taxon>Bacteria</taxon>
        <taxon>Pseudomonadati</taxon>
        <taxon>Pseudomonadota</taxon>
        <taxon>Gammaproteobacteria</taxon>
        <taxon>Vibrionales</taxon>
        <taxon>Vibrionaceae</taxon>
        <taxon>Vibrio</taxon>
    </lineage>
</organism>
<evidence type="ECO:0000250" key="1"/>
<evidence type="ECO:0000255" key="2"/>
<evidence type="ECO:0000305" key="3"/>
<dbReference type="EMBL" id="AE003852">
    <property type="protein sequence ID" value="AAF95332.1"/>
    <property type="molecule type" value="Genomic_DNA"/>
</dbReference>
<dbReference type="PIR" id="F82107">
    <property type="entry name" value="F82107"/>
</dbReference>
<dbReference type="RefSeq" id="NP_231818.1">
    <property type="nucleotide sequence ID" value="NC_002505.1"/>
</dbReference>
<dbReference type="RefSeq" id="WP_000290380.1">
    <property type="nucleotide sequence ID" value="NZ_LT906614.1"/>
</dbReference>
<dbReference type="SMR" id="P0C6C5"/>
<dbReference type="STRING" id="243277.VC_2187"/>
<dbReference type="DNASU" id="2613227"/>
<dbReference type="EnsemblBacteria" id="AAF95332">
    <property type="protein sequence ID" value="AAF95332"/>
    <property type="gene ID" value="VC_2187"/>
</dbReference>
<dbReference type="KEGG" id="vch:VC_2187"/>
<dbReference type="PATRIC" id="fig|243277.26.peg.2085"/>
<dbReference type="eggNOG" id="COG1344">
    <property type="taxonomic scope" value="Bacteria"/>
</dbReference>
<dbReference type="HOGENOM" id="CLU_011142_4_0_6"/>
<dbReference type="Proteomes" id="UP000000584">
    <property type="component" value="Chromosome 1"/>
</dbReference>
<dbReference type="GO" id="GO:0009288">
    <property type="term" value="C:bacterial-type flagellum"/>
    <property type="evidence" value="ECO:0007669"/>
    <property type="project" value="UniProtKB-SubCell"/>
</dbReference>
<dbReference type="GO" id="GO:0005576">
    <property type="term" value="C:extracellular region"/>
    <property type="evidence" value="ECO:0007669"/>
    <property type="project" value="UniProtKB-SubCell"/>
</dbReference>
<dbReference type="GO" id="GO:0005198">
    <property type="term" value="F:structural molecule activity"/>
    <property type="evidence" value="ECO:0007669"/>
    <property type="project" value="InterPro"/>
</dbReference>
<dbReference type="Gene3D" id="3.30.70.2120">
    <property type="match status" value="1"/>
</dbReference>
<dbReference type="Gene3D" id="1.20.1330.10">
    <property type="entry name" value="f41 fragment of flagellin, N-terminal domain"/>
    <property type="match status" value="1"/>
</dbReference>
<dbReference type="Gene3D" id="6.10.10.10">
    <property type="entry name" value="Flagellar export chaperone, C-terminal domain"/>
    <property type="match status" value="1"/>
</dbReference>
<dbReference type="InterPro" id="IPR001492">
    <property type="entry name" value="Flagellin"/>
</dbReference>
<dbReference type="InterPro" id="IPR046358">
    <property type="entry name" value="Flagellin_C"/>
</dbReference>
<dbReference type="InterPro" id="IPR042187">
    <property type="entry name" value="Flagellin_C_sub2"/>
</dbReference>
<dbReference type="InterPro" id="IPR010810">
    <property type="entry name" value="Flagellin_hook_IN_motif"/>
</dbReference>
<dbReference type="InterPro" id="IPR001029">
    <property type="entry name" value="Flagellin_N"/>
</dbReference>
<dbReference type="NCBIfam" id="NF006466">
    <property type="entry name" value="PRK08869.1-1"/>
    <property type="match status" value="1"/>
</dbReference>
<dbReference type="NCBIfam" id="NF006468">
    <property type="entry name" value="PRK08869.1-3"/>
    <property type="match status" value="1"/>
</dbReference>
<dbReference type="PANTHER" id="PTHR42792">
    <property type="entry name" value="FLAGELLIN"/>
    <property type="match status" value="1"/>
</dbReference>
<dbReference type="PANTHER" id="PTHR42792:SF2">
    <property type="entry name" value="FLAGELLIN"/>
    <property type="match status" value="1"/>
</dbReference>
<dbReference type="Pfam" id="PF00700">
    <property type="entry name" value="Flagellin_C"/>
    <property type="match status" value="1"/>
</dbReference>
<dbReference type="Pfam" id="PF07196">
    <property type="entry name" value="Flagellin_IN"/>
    <property type="match status" value="1"/>
</dbReference>
<dbReference type="Pfam" id="PF00669">
    <property type="entry name" value="Flagellin_N"/>
    <property type="match status" value="1"/>
</dbReference>
<dbReference type="PRINTS" id="PR00207">
    <property type="entry name" value="FLAGELLIN"/>
</dbReference>
<dbReference type="SUPFAM" id="SSF64518">
    <property type="entry name" value="Phase 1 flagellin"/>
    <property type="match status" value="1"/>
</dbReference>
<feature type="chain" id="PRO_0000182650" description="Flagellin C">
    <location>
        <begin position="1"/>
        <end position="377"/>
    </location>
</feature>
<feature type="coiled-coil region" evidence="2">
    <location>
        <begin position="103"/>
        <end position="129"/>
    </location>
</feature>
<feature type="coiled-coil region" evidence="2">
    <location>
        <begin position="301"/>
        <end position="340"/>
    </location>
</feature>
<gene>
    <name type="primary">flaC</name>
    <name type="ordered locus">VC_2187</name>
</gene>
<proteinExistence type="inferred from homology"/>
<reference key="1">
    <citation type="journal article" date="2000" name="Nature">
        <title>DNA sequence of both chromosomes of the cholera pathogen Vibrio cholerae.</title>
        <authorList>
            <person name="Heidelberg J.F."/>
            <person name="Eisen J.A."/>
            <person name="Nelson W.C."/>
            <person name="Clayton R.A."/>
            <person name="Gwinn M.L."/>
            <person name="Dodson R.J."/>
            <person name="Haft D.H."/>
            <person name="Hickey E.K."/>
            <person name="Peterson J.D."/>
            <person name="Umayam L.A."/>
            <person name="Gill S.R."/>
            <person name="Nelson K.E."/>
            <person name="Read T.D."/>
            <person name="Tettelin H."/>
            <person name="Richardson D.L."/>
            <person name="Ermolaeva M.D."/>
            <person name="Vamathevan J.J."/>
            <person name="Bass S."/>
            <person name="Qin H."/>
            <person name="Dragoi I."/>
            <person name="Sellers P."/>
            <person name="McDonald L.A."/>
            <person name="Utterback T.R."/>
            <person name="Fleischmann R.D."/>
            <person name="Nierman W.C."/>
            <person name="White O."/>
            <person name="Salzberg S.L."/>
            <person name="Smith H.O."/>
            <person name="Colwell R.R."/>
            <person name="Mekalanos J.J."/>
            <person name="Venter J.C."/>
            <person name="Fraser C.M."/>
        </authorList>
    </citation>
    <scope>NUCLEOTIDE SEQUENCE [LARGE SCALE GENOMIC DNA]</scope>
    <source>
        <strain>ATCC 39315 / El Tor Inaba N16961</strain>
    </source>
</reference>
<accession>P0C6C5</accession>
<accession>O34221</accession>
<name>FLAC_VIBCH</name>
<protein>
    <recommendedName>
        <fullName>Flagellin C</fullName>
    </recommendedName>
</protein>
<comment type="function">
    <text evidence="1">Flagellin is the subunit protein which polymerizes to form the filaments of bacterial flagella. FlaC is not essential for flagellar synthesis and motility (By similarity).</text>
</comment>
<comment type="subunit">
    <text evidence="1">Heteromer of multiple flagellin subunits including FlaA, FlaB, FlaC, FlaD and FlaE.</text>
</comment>
<comment type="subcellular location">
    <subcellularLocation>
        <location evidence="1">Secreted</location>
    </subcellularLocation>
    <subcellularLocation>
        <location evidence="1">Bacterial flagellum</location>
    </subcellularLocation>
</comment>
<comment type="miscellaneous">
    <text>V.cholerae is able to differentially regulate the flagellins within the flagellum maybe to produce flagella which are particularly suited for motility within a given environment.</text>
</comment>
<comment type="similarity">
    <text evidence="3">Belongs to the bacterial flagellin family.</text>
</comment>